<feature type="chain" id="PRO_0000293176" description="D-erythrose-4-phosphate dehydrogenase">
    <location>
        <begin position="1"/>
        <end position="346"/>
    </location>
</feature>
<feature type="active site" description="Nucleophile" evidence="1">
    <location>
        <position position="164"/>
    </location>
</feature>
<feature type="binding site" evidence="1">
    <location>
        <begin position="11"/>
        <end position="12"/>
    </location>
    <ligand>
        <name>NAD(+)</name>
        <dbReference type="ChEBI" id="CHEBI:57540"/>
    </ligand>
</feature>
<feature type="binding site" evidence="1">
    <location>
        <begin position="163"/>
        <end position="165"/>
    </location>
    <ligand>
        <name>substrate</name>
    </ligand>
</feature>
<feature type="binding site" evidence="1">
    <location>
        <position position="209"/>
    </location>
    <ligand>
        <name>substrate</name>
    </ligand>
</feature>
<feature type="binding site" evidence="1">
    <location>
        <begin position="222"/>
        <end position="223"/>
    </location>
    <ligand>
        <name>substrate</name>
    </ligand>
</feature>
<feature type="binding site" evidence="1">
    <location>
        <position position="245"/>
    </location>
    <ligand>
        <name>substrate</name>
    </ligand>
</feature>
<feature type="binding site" evidence="1">
    <location>
        <position position="327"/>
    </location>
    <ligand>
        <name>NAD(+)</name>
        <dbReference type="ChEBI" id="CHEBI:57540"/>
    </ligand>
</feature>
<feature type="site" description="Activates thiol group during catalysis" evidence="1">
    <location>
        <position position="191"/>
    </location>
</feature>
<organism>
    <name type="scientific">Vibrio vulnificus (strain CMCP6)</name>
    <dbReference type="NCBI Taxonomy" id="216895"/>
    <lineage>
        <taxon>Bacteria</taxon>
        <taxon>Pseudomonadati</taxon>
        <taxon>Pseudomonadota</taxon>
        <taxon>Gammaproteobacteria</taxon>
        <taxon>Vibrionales</taxon>
        <taxon>Vibrionaceae</taxon>
        <taxon>Vibrio</taxon>
    </lineage>
</organism>
<gene>
    <name evidence="1" type="primary">epd</name>
    <name type="ordered locus">VV1_1539</name>
</gene>
<dbReference type="EC" id="1.2.1.72" evidence="1"/>
<dbReference type="EMBL" id="AE016795">
    <property type="protein sequence ID" value="AAO09964.1"/>
    <property type="molecule type" value="Genomic_DNA"/>
</dbReference>
<dbReference type="RefSeq" id="WP_011079475.1">
    <property type="nucleotide sequence ID" value="NC_004459.3"/>
</dbReference>
<dbReference type="SMR" id="Q8DCA1"/>
<dbReference type="KEGG" id="vvu:VV1_1539"/>
<dbReference type="HOGENOM" id="CLU_030140_0_0_6"/>
<dbReference type="UniPathway" id="UPA00244">
    <property type="reaction ID" value="UER00309"/>
</dbReference>
<dbReference type="Proteomes" id="UP000002275">
    <property type="component" value="Chromosome 1"/>
</dbReference>
<dbReference type="GO" id="GO:0005737">
    <property type="term" value="C:cytoplasm"/>
    <property type="evidence" value="ECO:0007669"/>
    <property type="project" value="UniProtKB-SubCell"/>
</dbReference>
<dbReference type="GO" id="GO:0048001">
    <property type="term" value="F:erythrose-4-phosphate dehydrogenase activity"/>
    <property type="evidence" value="ECO:0007669"/>
    <property type="project" value="UniProtKB-UniRule"/>
</dbReference>
<dbReference type="GO" id="GO:0051287">
    <property type="term" value="F:NAD binding"/>
    <property type="evidence" value="ECO:0007669"/>
    <property type="project" value="InterPro"/>
</dbReference>
<dbReference type="GO" id="GO:0042823">
    <property type="term" value="P:pyridoxal phosphate biosynthetic process"/>
    <property type="evidence" value="ECO:0007669"/>
    <property type="project" value="UniProtKB-UniRule"/>
</dbReference>
<dbReference type="GO" id="GO:0008615">
    <property type="term" value="P:pyridoxine biosynthetic process"/>
    <property type="evidence" value="ECO:0007669"/>
    <property type="project" value="UniProtKB-UniRule"/>
</dbReference>
<dbReference type="CDD" id="cd23937">
    <property type="entry name" value="GAPDH_C_E4PDH"/>
    <property type="match status" value="1"/>
</dbReference>
<dbReference type="FunFam" id="3.30.360.10:FF:000007">
    <property type="entry name" value="D-erythrose-4-phosphate dehydrogenase"/>
    <property type="match status" value="1"/>
</dbReference>
<dbReference type="FunFam" id="3.40.50.720:FF:000001">
    <property type="entry name" value="Glyceraldehyde-3-phosphate dehydrogenase"/>
    <property type="match status" value="1"/>
</dbReference>
<dbReference type="Gene3D" id="3.30.360.10">
    <property type="entry name" value="Dihydrodipicolinate Reductase, domain 2"/>
    <property type="match status" value="1"/>
</dbReference>
<dbReference type="Gene3D" id="3.40.50.720">
    <property type="entry name" value="NAD(P)-binding Rossmann-like Domain"/>
    <property type="match status" value="1"/>
</dbReference>
<dbReference type="HAMAP" id="MF_01640">
    <property type="entry name" value="E4P_dehydrog"/>
    <property type="match status" value="1"/>
</dbReference>
<dbReference type="InterPro" id="IPR006422">
    <property type="entry name" value="E4P_DH_bac"/>
</dbReference>
<dbReference type="InterPro" id="IPR020831">
    <property type="entry name" value="GlycerAld/Erythrose_P_DH"/>
</dbReference>
<dbReference type="InterPro" id="IPR020829">
    <property type="entry name" value="GlycerAld_3-P_DH_cat"/>
</dbReference>
<dbReference type="InterPro" id="IPR020828">
    <property type="entry name" value="GlycerAld_3-P_DH_NAD(P)-bd"/>
</dbReference>
<dbReference type="InterPro" id="IPR036291">
    <property type="entry name" value="NAD(P)-bd_dom_sf"/>
</dbReference>
<dbReference type="NCBIfam" id="TIGR01532">
    <property type="entry name" value="E4PD_g-proteo"/>
    <property type="match status" value="1"/>
</dbReference>
<dbReference type="NCBIfam" id="NF010058">
    <property type="entry name" value="PRK13535.1"/>
    <property type="match status" value="1"/>
</dbReference>
<dbReference type="PANTHER" id="PTHR43148">
    <property type="entry name" value="GLYCERALDEHYDE-3-PHOSPHATE DEHYDROGENASE 2"/>
    <property type="match status" value="1"/>
</dbReference>
<dbReference type="Pfam" id="PF02800">
    <property type="entry name" value="Gp_dh_C"/>
    <property type="match status" value="1"/>
</dbReference>
<dbReference type="Pfam" id="PF00044">
    <property type="entry name" value="Gp_dh_N"/>
    <property type="match status" value="1"/>
</dbReference>
<dbReference type="PIRSF" id="PIRSF000149">
    <property type="entry name" value="GAP_DH"/>
    <property type="match status" value="1"/>
</dbReference>
<dbReference type="PRINTS" id="PR00078">
    <property type="entry name" value="G3PDHDRGNASE"/>
</dbReference>
<dbReference type="SMART" id="SM00846">
    <property type="entry name" value="Gp_dh_N"/>
    <property type="match status" value="1"/>
</dbReference>
<dbReference type="SUPFAM" id="SSF55347">
    <property type="entry name" value="Glyceraldehyde-3-phosphate dehydrogenase-like, C-terminal domain"/>
    <property type="match status" value="1"/>
</dbReference>
<dbReference type="SUPFAM" id="SSF51735">
    <property type="entry name" value="NAD(P)-binding Rossmann-fold domains"/>
    <property type="match status" value="1"/>
</dbReference>
<reference key="1">
    <citation type="submission" date="2002-12" db="EMBL/GenBank/DDBJ databases">
        <title>Complete genome sequence of Vibrio vulnificus CMCP6.</title>
        <authorList>
            <person name="Rhee J.H."/>
            <person name="Kim S.Y."/>
            <person name="Chung S.S."/>
            <person name="Kim J.J."/>
            <person name="Moon Y.H."/>
            <person name="Jeong H."/>
            <person name="Choy H.E."/>
        </authorList>
    </citation>
    <scope>NUCLEOTIDE SEQUENCE [LARGE SCALE GENOMIC DNA]</scope>
    <source>
        <strain>CMCP6</strain>
    </source>
</reference>
<comment type="function">
    <text evidence="1">Catalyzes the NAD-dependent conversion of D-erythrose 4-phosphate to 4-phosphoerythronate.</text>
</comment>
<comment type="catalytic activity">
    <reaction evidence="1">
        <text>D-erythrose 4-phosphate + NAD(+) + H2O = 4-phospho-D-erythronate + NADH + 2 H(+)</text>
        <dbReference type="Rhea" id="RHEA:12056"/>
        <dbReference type="ChEBI" id="CHEBI:15377"/>
        <dbReference type="ChEBI" id="CHEBI:15378"/>
        <dbReference type="ChEBI" id="CHEBI:16897"/>
        <dbReference type="ChEBI" id="CHEBI:57540"/>
        <dbReference type="ChEBI" id="CHEBI:57945"/>
        <dbReference type="ChEBI" id="CHEBI:58766"/>
        <dbReference type="EC" id="1.2.1.72"/>
    </reaction>
</comment>
<comment type="pathway">
    <text evidence="1">Cofactor biosynthesis; pyridoxine 5'-phosphate biosynthesis; pyridoxine 5'-phosphate from D-erythrose 4-phosphate: step 1/5.</text>
</comment>
<comment type="subunit">
    <text evidence="1">Homotetramer.</text>
</comment>
<comment type="subcellular location">
    <subcellularLocation>
        <location evidence="1">Cytoplasm</location>
    </subcellularLocation>
</comment>
<comment type="similarity">
    <text evidence="1">Belongs to the glyceraldehyde-3-phosphate dehydrogenase family. Epd subfamily.</text>
</comment>
<sequence length="346" mass="38189">MLKVAINGFGRIGRNVLRAVYESGKHQQIKVVAVNELAQPEAMAHLLQYDTSHGRFGKRISHDQEHLYVHHDACPQGKGEFDSIRILHLSEINLLPWRDLEVDLVLDCTGVFGCQADGLEHIKAGAKKVLFSHPGASDLDNTIIYGVNHETLKAEHNVVSNGSCTTNCIVPIIKVLDEAFGIESGTITTIHSSMNDQQVIDAYHSDLRRTRAASQSIIPVDTKLHKGIERIFPKFSNKFEAISVRVPTVNVTAMDLSVTINTNVKVNDVNQTIVNASQCTLRGIVDYTEAPLVSIDFNHDPHSAIVDGSQTRVSNGHLVKMLVWCDNEWGFANRMLDTALAMQAAQ</sequence>
<accession>Q8DCA1</accession>
<evidence type="ECO:0000255" key="1">
    <source>
        <dbReference type="HAMAP-Rule" id="MF_01640"/>
    </source>
</evidence>
<proteinExistence type="inferred from homology"/>
<keyword id="KW-0963">Cytoplasm</keyword>
<keyword id="KW-0520">NAD</keyword>
<keyword id="KW-0560">Oxidoreductase</keyword>
<keyword id="KW-0664">Pyridoxine biosynthesis</keyword>
<name>E4PD_VIBVU</name>
<protein>
    <recommendedName>
        <fullName evidence="1">D-erythrose-4-phosphate dehydrogenase</fullName>
        <shortName evidence="1">E4PDH</shortName>
        <ecNumber evidence="1">1.2.1.72</ecNumber>
    </recommendedName>
</protein>